<feature type="chain" id="PRO_1000016055" description="Aspartyl/glutamyl-tRNA(Asn/Gln) amidotransferase subunit B">
    <location>
        <begin position="1"/>
        <end position="494"/>
    </location>
</feature>
<gene>
    <name evidence="1" type="primary">gatB</name>
    <name type="ordered locus">Tery_3843</name>
</gene>
<keyword id="KW-0067">ATP-binding</keyword>
<keyword id="KW-0436">Ligase</keyword>
<keyword id="KW-0547">Nucleotide-binding</keyword>
<keyword id="KW-0648">Protein biosynthesis</keyword>
<evidence type="ECO:0000255" key="1">
    <source>
        <dbReference type="HAMAP-Rule" id="MF_00121"/>
    </source>
</evidence>
<proteinExistence type="inferred from homology"/>
<name>GATB_TRIEI</name>
<organism>
    <name type="scientific">Trichodesmium erythraeum (strain IMS101)</name>
    <dbReference type="NCBI Taxonomy" id="203124"/>
    <lineage>
        <taxon>Bacteria</taxon>
        <taxon>Bacillati</taxon>
        <taxon>Cyanobacteriota</taxon>
        <taxon>Cyanophyceae</taxon>
        <taxon>Oscillatoriophycideae</taxon>
        <taxon>Oscillatoriales</taxon>
        <taxon>Microcoleaceae</taxon>
        <taxon>Trichodesmium</taxon>
    </lineage>
</organism>
<comment type="function">
    <text evidence="1">Allows the formation of correctly charged Asn-tRNA(Asn) or Gln-tRNA(Gln) through the transamidation of misacylated Asp-tRNA(Asn) or Glu-tRNA(Gln) in organisms which lack either or both of asparaginyl-tRNA or glutaminyl-tRNA synthetases. The reaction takes place in the presence of glutamine and ATP through an activated phospho-Asp-tRNA(Asn) or phospho-Glu-tRNA(Gln).</text>
</comment>
<comment type="catalytic activity">
    <reaction evidence="1">
        <text>L-glutamyl-tRNA(Gln) + L-glutamine + ATP + H2O = L-glutaminyl-tRNA(Gln) + L-glutamate + ADP + phosphate + H(+)</text>
        <dbReference type="Rhea" id="RHEA:17521"/>
        <dbReference type="Rhea" id="RHEA-COMP:9681"/>
        <dbReference type="Rhea" id="RHEA-COMP:9684"/>
        <dbReference type="ChEBI" id="CHEBI:15377"/>
        <dbReference type="ChEBI" id="CHEBI:15378"/>
        <dbReference type="ChEBI" id="CHEBI:29985"/>
        <dbReference type="ChEBI" id="CHEBI:30616"/>
        <dbReference type="ChEBI" id="CHEBI:43474"/>
        <dbReference type="ChEBI" id="CHEBI:58359"/>
        <dbReference type="ChEBI" id="CHEBI:78520"/>
        <dbReference type="ChEBI" id="CHEBI:78521"/>
        <dbReference type="ChEBI" id="CHEBI:456216"/>
    </reaction>
</comment>
<comment type="catalytic activity">
    <reaction evidence="1">
        <text>L-aspartyl-tRNA(Asn) + L-glutamine + ATP + H2O = L-asparaginyl-tRNA(Asn) + L-glutamate + ADP + phosphate + 2 H(+)</text>
        <dbReference type="Rhea" id="RHEA:14513"/>
        <dbReference type="Rhea" id="RHEA-COMP:9674"/>
        <dbReference type="Rhea" id="RHEA-COMP:9677"/>
        <dbReference type="ChEBI" id="CHEBI:15377"/>
        <dbReference type="ChEBI" id="CHEBI:15378"/>
        <dbReference type="ChEBI" id="CHEBI:29985"/>
        <dbReference type="ChEBI" id="CHEBI:30616"/>
        <dbReference type="ChEBI" id="CHEBI:43474"/>
        <dbReference type="ChEBI" id="CHEBI:58359"/>
        <dbReference type="ChEBI" id="CHEBI:78515"/>
        <dbReference type="ChEBI" id="CHEBI:78516"/>
        <dbReference type="ChEBI" id="CHEBI:456216"/>
    </reaction>
</comment>
<comment type="subunit">
    <text evidence="1">Heterotrimer of A, B and C subunits.</text>
</comment>
<comment type="similarity">
    <text evidence="1">Belongs to the GatB/GatE family. GatB subfamily.</text>
</comment>
<protein>
    <recommendedName>
        <fullName evidence="1">Aspartyl/glutamyl-tRNA(Asn/Gln) amidotransferase subunit B</fullName>
        <shortName evidence="1">Asp/Glu-ADT subunit B</shortName>
        <ecNumber evidence="1">6.3.5.-</ecNumber>
    </recommendedName>
</protein>
<accession>Q10XY9</accession>
<dbReference type="EC" id="6.3.5.-" evidence="1"/>
<dbReference type="EMBL" id="CP000393">
    <property type="protein sequence ID" value="ABG52885.1"/>
    <property type="molecule type" value="Genomic_DNA"/>
</dbReference>
<dbReference type="RefSeq" id="WP_011613215.1">
    <property type="nucleotide sequence ID" value="NC_008312.1"/>
</dbReference>
<dbReference type="SMR" id="Q10XY9"/>
<dbReference type="STRING" id="203124.Tery_3843"/>
<dbReference type="KEGG" id="ter:Tery_3843"/>
<dbReference type="eggNOG" id="COG0064">
    <property type="taxonomic scope" value="Bacteria"/>
</dbReference>
<dbReference type="HOGENOM" id="CLU_019240_0_0_3"/>
<dbReference type="OrthoDB" id="9804078at2"/>
<dbReference type="GO" id="GO:0050566">
    <property type="term" value="F:asparaginyl-tRNA synthase (glutamine-hydrolyzing) activity"/>
    <property type="evidence" value="ECO:0007669"/>
    <property type="project" value="RHEA"/>
</dbReference>
<dbReference type="GO" id="GO:0005524">
    <property type="term" value="F:ATP binding"/>
    <property type="evidence" value="ECO:0007669"/>
    <property type="project" value="UniProtKB-KW"/>
</dbReference>
<dbReference type="GO" id="GO:0050567">
    <property type="term" value="F:glutaminyl-tRNA synthase (glutamine-hydrolyzing) activity"/>
    <property type="evidence" value="ECO:0007669"/>
    <property type="project" value="UniProtKB-UniRule"/>
</dbReference>
<dbReference type="GO" id="GO:0070681">
    <property type="term" value="P:glutaminyl-tRNAGln biosynthesis via transamidation"/>
    <property type="evidence" value="ECO:0007669"/>
    <property type="project" value="TreeGrafter"/>
</dbReference>
<dbReference type="GO" id="GO:0006412">
    <property type="term" value="P:translation"/>
    <property type="evidence" value="ECO:0007669"/>
    <property type="project" value="UniProtKB-UniRule"/>
</dbReference>
<dbReference type="FunFam" id="1.10.10.410:FF:000001">
    <property type="entry name" value="Aspartyl/glutamyl-tRNA(Asn/Gln) amidotransferase subunit B"/>
    <property type="match status" value="1"/>
</dbReference>
<dbReference type="FunFam" id="1.10.150.380:FF:000001">
    <property type="entry name" value="Aspartyl/glutamyl-tRNA(Asn/Gln) amidotransferase subunit B"/>
    <property type="match status" value="1"/>
</dbReference>
<dbReference type="Gene3D" id="1.10.10.410">
    <property type="match status" value="1"/>
</dbReference>
<dbReference type="Gene3D" id="1.10.150.380">
    <property type="entry name" value="GatB domain, N-terminal subdomain"/>
    <property type="match status" value="1"/>
</dbReference>
<dbReference type="HAMAP" id="MF_00121">
    <property type="entry name" value="GatB"/>
    <property type="match status" value="1"/>
</dbReference>
<dbReference type="InterPro" id="IPR017959">
    <property type="entry name" value="Asn/Gln-tRNA_amidoTrfase_suB/E"/>
</dbReference>
<dbReference type="InterPro" id="IPR006075">
    <property type="entry name" value="Asn/Gln-tRNA_Trfase_suB/E_cat"/>
</dbReference>
<dbReference type="InterPro" id="IPR018027">
    <property type="entry name" value="Asn/Gln_amidotransferase"/>
</dbReference>
<dbReference type="InterPro" id="IPR003789">
    <property type="entry name" value="Asn/Gln_tRNA_amidoTrase-B-like"/>
</dbReference>
<dbReference type="InterPro" id="IPR004413">
    <property type="entry name" value="GatB"/>
</dbReference>
<dbReference type="InterPro" id="IPR042114">
    <property type="entry name" value="GatB_C_1"/>
</dbReference>
<dbReference type="InterPro" id="IPR023168">
    <property type="entry name" value="GatB_Yqey_C_2"/>
</dbReference>
<dbReference type="InterPro" id="IPR017958">
    <property type="entry name" value="Gln-tRNA_amidoTrfase_suB_CS"/>
</dbReference>
<dbReference type="InterPro" id="IPR014746">
    <property type="entry name" value="Gln_synth/guanido_kin_cat_dom"/>
</dbReference>
<dbReference type="NCBIfam" id="TIGR00133">
    <property type="entry name" value="gatB"/>
    <property type="match status" value="1"/>
</dbReference>
<dbReference type="NCBIfam" id="NF004012">
    <property type="entry name" value="PRK05477.1-2"/>
    <property type="match status" value="1"/>
</dbReference>
<dbReference type="NCBIfam" id="NF004014">
    <property type="entry name" value="PRK05477.1-4"/>
    <property type="match status" value="1"/>
</dbReference>
<dbReference type="PANTHER" id="PTHR11659">
    <property type="entry name" value="GLUTAMYL-TRNA GLN AMIDOTRANSFERASE SUBUNIT B MITOCHONDRIAL AND PROKARYOTIC PET112-RELATED"/>
    <property type="match status" value="1"/>
</dbReference>
<dbReference type="PANTHER" id="PTHR11659:SF0">
    <property type="entry name" value="GLUTAMYL-TRNA(GLN) AMIDOTRANSFERASE SUBUNIT B, MITOCHONDRIAL"/>
    <property type="match status" value="1"/>
</dbReference>
<dbReference type="Pfam" id="PF02934">
    <property type="entry name" value="GatB_N"/>
    <property type="match status" value="1"/>
</dbReference>
<dbReference type="Pfam" id="PF02637">
    <property type="entry name" value="GatB_Yqey"/>
    <property type="match status" value="1"/>
</dbReference>
<dbReference type="SMART" id="SM00845">
    <property type="entry name" value="GatB_Yqey"/>
    <property type="match status" value="1"/>
</dbReference>
<dbReference type="SUPFAM" id="SSF89095">
    <property type="entry name" value="GatB/YqeY motif"/>
    <property type="match status" value="1"/>
</dbReference>
<dbReference type="SUPFAM" id="SSF55931">
    <property type="entry name" value="Glutamine synthetase/guanido kinase"/>
    <property type="match status" value="1"/>
</dbReference>
<dbReference type="PROSITE" id="PS01234">
    <property type="entry name" value="GATB"/>
    <property type="match status" value="1"/>
</dbReference>
<reference key="1">
    <citation type="journal article" date="2015" name="Proc. Natl. Acad. Sci. U.S.A.">
        <title>Trichodesmium genome maintains abundant, widespread noncoding DNA in situ, despite oligotrophic lifestyle.</title>
        <authorList>
            <person name="Walworth N."/>
            <person name="Pfreundt U."/>
            <person name="Nelson W.C."/>
            <person name="Mincer T."/>
            <person name="Heidelberg J.F."/>
            <person name="Fu F."/>
            <person name="Waterbury J.B."/>
            <person name="Glavina del Rio T."/>
            <person name="Goodwin L."/>
            <person name="Kyrpides N.C."/>
            <person name="Land M.L."/>
            <person name="Woyke T."/>
            <person name="Hutchins D.A."/>
            <person name="Hess W.R."/>
            <person name="Webb E.A."/>
        </authorList>
    </citation>
    <scope>NUCLEOTIDE SEQUENCE [LARGE SCALE GENOMIC DNA]</scope>
    <source>
        <strain>IMS101</strain>
    </source>
</reference>
<sequence>MTTTVPVKTKYEAIIGLETHCQLSTQTKIFSNSSTEFGATPNTNIDPICMGMPGVLPVLNEKVLEYAVKAGLALNCEIALYSKFDRKQYFYPDLPKNYQISQYDLPIAEHGWLEIEIVEEDGNATRKKIGITRLHMEEDAGKLVHGGSDRLSGSTYSMVDYNRAGVPLIEIVSEPDIRSGIEAAEYAQELRRIVRYLGVSDGNMQEGSLRCDVNVSVRPVGQKEFGTKVEIKNMNSFSAIQRAIEYEIERQTEAIETGEKIIQETRLWEEASQCTVSMRTKEGSSDYRYFPEPDIPPIEVSTQQLDTWKAELPELPAQKRYLYESKLGLSAYDTRVLTDDFNVAKYFEAAVAAGGNSKQVANWVMGDITAFLKNEKISINDITLKPDNLAELVTIIDDGTISGKIAKDILPELLSKGGSPKELVEKKGLIQISDIKAIEAIIDEVLAAHPEELAKYRGGKTKLKGFFVGQVMKKTQGRADPKMTNQLISKKLEG</sequence>